<proteinExistence type="inferred from homology"/>
<feature type="chain" id="PRO_1000121389" description="Large ribosomal subunit protein bL12">
    <location>
        <begin position="1"/>
        <end position="119"/>
    </location>
</feature>
<keyword id="KW-0687">Ribonucleoprotein</keyword>
<keyword id="KW-0689">Ribosomal protein</keyword>
<sequence length="119" mass="12517">MTKEQIIEAVKSMTVLELNDLVKAIEEEFGVTAAAPVAVAGGAGEAAAEKTEFDVELTSAGAQKIKVIKVVREITGLGLKEAKELVDNTPKVIKEAAAKEEAEEIKAKLEEVGAAVEVK</sequence>
<organism>
    <name type="scientific">Bacillus cereus (strain G9842)</name>
    <dbReference type="NCBI Taxonomy" id="405531"/>
    <lineage>
        <taxon>Bacteria</taxon>
        <taxon>Bacillati</taxon>
        <taxon>Bacillota</taxon>
        <taxon>Bacilli</taxon>
        <taxon>Bacillales</taxon>
        <taxon>Bacillaceae</taxon>
        <taxon>Bacillus</taxon>
        <taxon>Bacillus cereus group</taxon>
    </lineage>
</organism>
<gene>
    <name evidence="1" type="primary">rplL</name>
    <name type="ordered locus">BCG9842_B5205</name>
</gene>
<reference key="1">
    <citation type="submission" date="2008-10" db="EMBL/GenBank/DDBJ databases">
        <title>Genome sequence of Bacillus cereus G9842.</title>
        <authorList>
            <person name="Dodson R.J."/>
            <person name="Durkin A.S."/>
            <person name="Rosovitz M.J."/>
            <person name="Rasko D.A."/>
            <person name="Hoffmaster A."/>
            <person name="Ravel J."/>
            <person name="Sutton G."/>
        </authorList>
    </citation>
    <scope>NUCLEOTIDE SEQUENCE [LARGE SCALE GENOMIC DNA]</scope>
    <source>
        <strain>G9842</strain>
    </source>
</reference>
<evidence type="ECO:0000255" key="1">
    <source>
        <dbReference type="HAMAP-Rule" id="MF_00368"/>
    </source>
</evidence>
<evidence type="ECO:0000305" key="2"/>
<accession>B7IT09</accession>
<protein>
    <recommendedName>
        <fullName evidence="1">Large ribosomal subunit protein bL12</fullName>
    </recommendedName>
    <alternativeName>
        <fullName evidence="2">50S ribosomal protein L7/L12</fullName>
    </alternativeName>
</protein>
<dbReference type="EMBL" id="CP001186">
    <property type="protein sequence ID" value="ACK95694.1"/>
    <property type="molecule type" value="Genomic_DNA"/>
</dbReference>
<dbReference type="RefSeq" id="WP_000159736.1">
    <property type="nucleotide sequence ID" value="NC_011772.1"/>
</dbReference>
<dbReference type="SMR" id="B7IT09"/>
<dbReference type="GeneID" id="93010953"/>
<dbReference type="KEGG" id="bcg:BCG9842_B5205"/>
<dbReference type="HOGENOM" id="CLU_086499_3_2_9"/>
<dbReference type="Proteomes" id="UP000006744">
    <property type="component" value="Chromosome"/>
</dbReference>
<dbReference type="GO" id="GO:0022625">
    <property type="term" value="C:cytosolic large ribosomal subunit"/>
    <property type="evidence" value="ECO:0007669"/>
    <property type="project" value="TreeGrafter"/>
</dbReference>
<dbReference type="GO" id="GO:0003729">
    <property type="term" value="F:mRNA binding"/>
    <property type="evidence" value="ECO:0007669"/>
    <property type="project" value="TreeGrafter"/>
</dbReference>
<dbReference type="GO" id="GO:0003735">
    <property type="term" value="F:structural constituent of ribosome"/>
    <property type="evidence" value="ECO:0007669"/>
    <property type="project" value="InterPro"/>
</dbReference>
<dbReference type="GO" id="GO:0006412">
    <property type="term" value="P:translation"/>
    <property type="evidence" value="ECO:0007669"/>
    <property type="project" value="UniProtKB-UniRule"/>
</dbReference>
<dbReference type="CDD" id="cd00387">
    <property type="entry name" value="Ribosomal_L7_L12"/>
    <property type="match status" value="1"/>
</dbReference>
<dbReference type="FunFam" id="1.20.5.710:FF:000002">
    <property type="entry name" value="50S ribosomal protein L7/L12"/>
    <property type="match status" value="1"/>
</dbReference>
<dbReference type="FunFam" id="3.30.1390.10:FF:000001">
    <property type="entry name" value="50S ribosomal protein L7/L12"/>
    <property type="match status" value="1"/>
</dbReference>
<dbReference type="Gene3D" id="3.30.1390.10">
    <property type="match status" value="1"/>
</dbReference>
<dbReference type="Gene3D" id="1.20.5.710">
    <property type="entry name" value="Single helix bin"/>
    <property type="match status" value="1"/>
</dbReference>
<dbReference type="HAMAP" id="MF_00368">
    <property type="entry name" value="Ribosomal_bL12"/>
    <property type="match status" value="1"/>
</dbReference>
<dbReference type="InterPro" id="IPR000206">
    <property type="entry name" value="Ribosomal_bL12"/>
</dbReference>
<dbReference type="InterPro" id="IPR013823">
    <property type="entry name" value="Ribosomal_bL12_C"/>
</dbReference>
<dbReference type="InterPro" id="IPR014719">
    <property type="entry name" value="Ribosomal_bL12_C/ClpS-like"/>
</dbReference>
<dbReference type="InterPro" id="IPR008932">
    <property type="entry name" value="Ribosomal_bL12_oligo"/>
</dbReference>
<dbReference type="InterPro" id="IPR036235">
    <property type="entry name" value="Ribosomal_bL12_oligo_N_sf"/>
</dbReference>
<dbReference type="NCBIfam" id="TIGR00855">
    <property type="entry name" value="L12"/>
    <property type="match status" value="1"/>
</dbReference>
<dbReference type="PANTHER" id="PTHR45987">
    <property type="entry name" value="39S RIBOSOMAL PROTEIN L12"/>
    <property type="match status" value="1"/>
</dbReference>
<dbReference type="PANTHER" id="PTHR45987:SF4">
    <property type="entry name" value="LARGE RIBOSOMAL SUBUNIT PROTEIN BL12M"/>
    <property type="match status" value="1"/>
</dbReference>
<dbReference type="Pfam" id="PF00542">
    <property type="entry name" value="Ribosomal_L12"/>
    <property type="match status" value="1"/>
</dbReference>
<dbReference type="Pfam" id="PF16320">
    <property type="entry name" value="Ribosomal_L12_N"/>
    <property type="match status" value="1"/>
</dbReference>
<dbReference type="SUPFAM" id="SSF54736">
    <property type="entry name" value="ClpS-like"/>
    <property type="match status" value="1"/>
</dbReference>
<dbReference type="SUPFAM" id="SSF48300">
    <property type="entry name" value="Ribosomal protein L7/12, oligomerisation (N-terminal) domain"/>
    <property type="match status" value="1"/>
</dbReference>
<comment type="function">
    <text evidence="1">Forms part of the ribosomal stalk which helps the ribosome interact with GTP-bound translation factors. Is thus essential for accurate translation.</text>
</comment>
<comment type="subunit">
    <text evidence="1">Homodimer. Part of the ribosomal stalk of the 50S ribosomal subunit. Forms a multimeric L10(L12)X complex, where L10 forms an elongated spine to which 2 to 4 L12 dimers bind in a sequential fashion. Binds GTP-bound translation factors.</text>
</comment>
<comment type="similarity">
    <text evidence="1">Belongs to the bacterial ribosomal protein bL12 family.</text>
</comment>
<name>RL7_BACC2</name>